<name>VRAC_STAEQ</name>
<accession>Q5HRH2</accession>
<sequence>MQLYLKDGMEIREVQFTNEEVQNYCELLNIKYDHYVPTLMCAKLWPQFELFQSFSKKPIILKETHIKTQQQLQVDCTYEATLHKVSQKLIKNIIKYTYGLEINKDKKHCMYIKQIFIEVR</sequence>
<keyword id="KW-1185">Reference proteome</keyword>
<organism>
    <name type="scientific">Staphylococcus epidermidis (strain ATCC 35984 / DSM 28319 / BCRC 17069 / CCUG 31568 / BM 3577 / RP62A)</name>
    <dbReference type="NCBI Taxonomy" id="176279"/>
    <lineage>
        <taxon>Bacteria</taxon>
        <taxon>Bacillati</taxon>
        <taxon>Bacillota</taxon>
        <taxon>Bacilli</taxon>
        <taxon>Bacillales</taxon>
        <taxon>Staphylococcaceae</taxon>
        <taxon>Staphylococcus</taxon>
    </lineage>
</organism>
<gene>
    <name type="ordered locus">SERP0221</name>
</gene>
<proteinExistence type="predicted"/>
<protein>
    <recommendedName>
        <fullName>Protein VraC</fullName>
    </recommendedName>
</protein>
<feature type="chain" id="PRO_0000065917" description="Protein VraC">
    <location>
        <begin position="1"/>
        <end position="120"/>
    </location>
</feature>
<dbReference type="EMBL" id="CP000029">
    <property type="protein sequence ID" value="AAW53601.1"/>
    <property type="molecule type" value="Genomic_DNA"/>
</dbReference>
<dbReference type="RefSeq" id="WP_002475544.1">
    <property type="nucleotide sequence ID" value="NC_002976.3"/>
</dbReference>
<dbReference type="SMR" id="Q5HRH2"/>
<dbReference type="STRING" id="176279.SERP0221"/>
<dbReference type="KEGG" id="ser:SERP0221"/>
<dbReference type="eggNOG" id="ENOG5030EW4">
    <property type="taxonomic scope" value="Bacteria"/>
</dbReference>
<dbReference type="HOGENOM" id="CLU_2195295_0_0_9"/>
<dbReference type="Proteomes" id="UP000000531">
    <property type="component" value="Chromosome"/>
</dbReference>
<dbReference type="InterPro" id="IPR016994">
    <property type="entry name" value="UCP032370_VraC"/>
</dbReference>
<dbReference type="PIRSF" id="PIRSF032370">
    <property type="entry name" value="UCP032370_VraC"/>
    <property type="match status" value="1"/>
</dbReference>
<reference key="1">
    <citation type="journal article" date="2005" name="J. Bacteriol.">
        <title>Insights on evolution of virulence and resistance from the complete genome analysis of an early methicillin-resistant Staphylococcus aureus strain and a biofilm-producing methicillin-resistant Staphylococcus epidermidis strain.</title>
        <authorList>
            <person name="Gill S.R."/>
            <person name="Fouts D.E."/>
            <person name="Archer G.L."/>
            <person name="Mongodin E.F."/>
            <person name="DeBoy R.T."/>
            <person name="Ravel J."/>
            <person name="Paulsen I.T."/>
            <person name="Kolonay J.F."/>
            <person name="Brinkac L.M."/>
            <person name="Beanan M.J."/>
            <person name="Dodson R.J."/>
            <person name="Daugherty S.C."/>
            <person name="Madupu R."/>
            <person name="Angiuoli S.V."/>
            <person name="Durkin A.S."/>
            <person name="Haft D.H."/>
            <person name="Vamathevan J.J."/>
            <person name="Khouri H."/>
            <person name="Utterback T.R."/>
            <person name="Lee C."/>
            <person name="Dimitrov G."/>
            <person name="Jiang L."/>
            <person name="Qin H."/>
            <person name="Weidman J."/>
            <person name="Tran K."/>
            <person name="Kang K.H."/>
            <person name="Hance I.R."/>
            <person name="Nelson K.E."/>
            <person name="Fraser C.M."/>
        </authorList>
    </citation>
    <scope>NUCLEOTIDE SEQUENCE [LARGE SCALE GENOMIC DNA]</scope>
    <source>
        <strain>ATCC 35984 / DSM 28319 / BCRC 17069 / CCUG 31568 / BM 3577 / RP62A</strain>
    </source>
</reference>